<gene>
    <name evidence="1" type="primary">nfsB</name>
    <name type="synonym">nfnB</name>
    <name evidence="6" type="synonym">nfsI</name>
</gene>
<feature type="chain" id="PRO_0000072712" description="Oxygen-insensitive NAD(P)H nitroreductase">
    <location>
        <begin position="1"/>
        <end position="217"/>
    </location>
</feature>
<feature type="binding site" evidence="3 7">
    <location>
        <begin position="10"/>
        <end position="14"/>
    </location>
    <ligand>
        <name>FMN</name>
        <dbReference type="ChEBI" id="CHEBI:58210"/>
    </ligand>
</feature>
<feature type="binding site" evidence="5 7">
    <location>
        <position position="14"/>
    </location>
    <ligand>
        <name>NAD(+)</name>
        <dbReference type="ChEBI" id="CHEBI:57540"/>
    </ligand>
</feature>
<feature type="binding site" evidence="5 7">
    <location>
        <position position="41"/>
    </location>
    <ligand>
        <name>NAD(+)</name>
        <dbReference type="ChEBI" id="CHEBI:57540"/>
    </ligand>
</feature>
<feature type="binding site" evidence="5 7">
    <location>
        <position position="67"/>
    </location>
    <ligand>
        <name>NAD(+)</name>
        <dbReference type="ChEBI" id="CHEBI:57540"/>
    </ligand>
</feature>
<feature type="binding site" evidence="3 7">
    <location>
        <position position="71"/>
    </location>
    <ligand>
        <name>FMN</name>
        <dbReference type="ChEBI" id="CHEBI:58210"/>
    </ligand>
</feature>
<feature type="binding site" evidence="5 7">
    <location>
        <position position="71"/>
    </location>
    <ligand>
        <name>NAD(+)</name>
        <dbReference type="ChEBI" id="CHEBI:57540"/>
    </ligand>
</feature>
<feature type="binding site" evidence="5 7">
    <location>
        <position position="74"/>
    </location>
    <ligand>
        <name>NAD(+)</name>
        <dbReference type="ChEBI" id="CHEBI:57540"/>
    </ligand>
</feature>
<feature type="binding site" evidence="5 7">
    <location>
        <position position="107"/>
    </location>
    <ligand>
        <name>NAD(+)</name>
        <dbReference type="ChEBI" id="CHEBI:57540"/>
    </ligand>
</feature>
<feature type="binding site" evidence="3 7">
    <location>
        <begin position="165"/>
        <end position="166"/>
    </location>
    <ligand>
        <name>FMN</name>
        <dbReference type="ChEBI" id="CHEBI:58210"/>
    </ligand>
</feature>
<feature type="binding site" evidence="3 7">
    <location>
        <begin position="205"/>
        <end position="207"/>
    </location>
    <ligand>
        <name>FMN</name>
        <dbReference type="ChEBI" id="CHEBI:58210"/>
    </ligand>
</feature>
<feature type="helix" evidence="9">
    <location>
        <begin position="3"/>
        <end position="9"/>
    </location>
</feature>
<feature type="helix" evidence="9">
    <location>
        <begin position="24"/>
        <end position="36"/>
    </location>
</feature>
<feature type="helix" evidence="9">
    <location>
        <begin position="40"/>
        <end position="42"/>
    </location>
</feature>
<feature type="strand" evidence="9">
    <location>
        <begin position="46"/>
        <end position="51"/>
    </location>
</feature>
<feature type="helix" evidence="9">
    <location>
        <begin position="54"/>
        <end position="60"/>
    </location>
</feature>
<feature type="helix" evidence="9">
    <location>
        <begin position="61"/>
        <end position="63"/>
    </location>
</feature>
<feature type="helix" evidence="9">
    <location>
        <begin position="66"/>
        <end position="71"/>
    </location>
</feature>
<feature type="helix" evidence="9">
    <location>
        <begin position="72"/>
        <end position="77"/>
    </location>
</feature>
<feature type="strand" evidence="9">
    <location>
        <begin position="78"/>
        <end position="89"/>
    </location>
</feature>
<feature type="helix" evidence="9">
    <location>
        <begin position="92"/>
        <end position="104"/>
    </location>
</feature>
<feature type="helix" evidence="9">
    <location>
        <begin position="111"/>
        <end position="129"/>
    </location>
</feature>
<feature type="turn" evidence="9">
    <location>
        <begin position="130"/>
        <end position="132"/>
    </location>
</feature>
<feature type="helix" evidence="9">
    <location>
        <begin position="135"/>
        <end position="156"/>
    </location>
</feature>
<feature type="helix" evidence="9">
    <location>
        <begin position="169"/>
        <end position="175"/>
    </location>
</feature>
<feature type="helix" evidence="9">
    <location>
        <begin position="178"/>
        <end position="181"/>
    </location>
</feature>
<feature type="strand" evidence="9">
    <location>
        <begin position="183"/>
        <end position="192"/>
    </location>
</feature>
<feature type="helix" evidence="9">
    <location>
        <begin position="199"/>
        <end position="201"/>
    </location>
</feature>
<feature type="helix" evidence="9">
    <location>
        <begin position="210"/>
        <end position="213"/>
    </location>
</feature>
<feature type="strand" evidence="9">
    <location>
        <begin position="214"/>
        <end position="217"/>
    </location>
</feature>
<organism>
    <name type="scientific">Enterobacter cloacae</name>
    <dbReference type="NCBI Taxonomy" id="550"/>
    <lineage>
        <taxon>Bacteria</taxon>
        <taxon>Pseudomonadati</taxon>
        <taxon>Pseudomonadota</taxon>
        <taxon>Gammaproteobacteria</taxon>
        <taxon>Enterobacterales</taxon>
        <taxon>Enterobacteriaceae</taxon>
        <taxon>Enterobacter</taxon>
        <taxon>Enterobacter cloacae complex</taxon>
    </lineage>
</organism>
<protein>
    <recommendedName>
        <fullName>Oxygen-insensitive NAD(P)H nitroreductase</fullName>
        <shortName>NR</shortName>
        <ecNumber>1.-.-.-</ecNumber>
    </recommendedName>
</protein>
<proteinExistence type="evidence at protein level"/>
<sequence length="217" mass="23950">MDIISVALKRHSTKAFDASKKLTAEEAEKIKTLLQYSPSSTNSQPWHFIVASTEEGKARVAKSAAGTYVFNERKMLDASHVVVFCAKTAMDDAWLERVVDQEEADGRFNTPEAKAANHKGRTYFADMHRVDLKDDDQWMAKQVYLNVGNFLLGVGAMGLDAVPIEGFDAAILDEEFGLKEKGFTSLVVVPVGHHSVEDFNATLPKSRLPLSTIVTEC</sequence>
<accession>Q01234</accession>
<dbReference type="EC" id="1.-.-.-"/>
<dbReference type="EMBL" id="M63808">
    <property type="protein sequence ID" value="AAA62801.1"/>
    <property type="molecule type" value="Genomic_DNA"/>
</dbReference>
<dbReference type="PIR" id="A38686">
    <property type="entry name" value="A38686"/>
</dbReference>
<dbReference type="PDB" id="1KQB">
    <property type="method" value="X-ray"/>
    <property type="resolution" value="1.80 A"/>
    <property type="chains" value="A/B/C/D=1-217"/>
</dbReference>
<dbReference type="PDB" id="1KQC">
    <property type="method" value="X-ray"/>
    <property type="resolution" value="1.80 A"/>
    <property type="chains" value="A/B/C/D=1-217"/>
</dbReference>
<dbReference type="PDB" id="1KQD">
    <property type="method" value="X-ray"/>
    <property type="resolution" value="1.90 A"/>
    <property type="chains" value="A/B/C/D=1-217"/>
</dbReference>
<dbReference type="PDB" id="1NEC">
    <property type="method" value="X-ray"/>
    <property type="resolution" value="1.95 A"/>
    <property type="chains" value="A/B/C/D=2-217"/>
</dbReference>
<dbReference type="PDB" id="5J8D">
    <property type="method" value="X-ray"/>
    <property type="resolution" value="1.85 A"/>
    <property type="chains" value="A/B/C/D=2-217"/>
</dbReference>
<dbReference type="PDB" id="5J8G">
    <property type="method" value="X-ray"/>
    <property type="resolution" value="1.90 A"/>
    <property type="chains" value="A/B/C/D=2-217"/>
</dbReference>
<dbReference type="PDBsum" id="1KQB"/>
<dbReference type="PDBsum" id="1KQC"/>
<dbReference type="PDBsum" id="1KQD"/>
<dbReference type="PDBsum" id="1NEC"/>
<dbReference type="PDBsum" id="5J8D"/>
<dbReference type="PDBsum" id="5J8G"/>
<dbReference type="SMR" id="Q01234"/>
<dbReference type="DrugBank" id="DB03793">
    <property type="generic name" value="Benzoic acid"/>
</dbReference>
<dbReference type="DrugBank" id="DB03247">
    <property type="generic name" value="Flavin mononucleotide"/>
</dbReference>
<dbReference type="eggNOG" id="COG0778">
    <property type="taxonomic scope" value="Bacteria"/>
</dbReference>
<dbReference type="BRENDA" id="1.7.1.16">
    <property type="organism ID" value="155"/>
</dbReference>
<dbReference type="EvolutionaryTrace" id="Q01234"/>
<dbReference type="GO" id="GO:0005829">
    <property type="term" value="C:cytosol"/>
    <property type="evidence" value="ECO:0007669"/>
    <property type="project" value="TreeGrafter"/>
</dbReference>
<dbReference type="GO" id="GO:0046857">
    <property type="term" value="F:oxidoreductase activity, acting on other nitrogenous compounds as donors, with NAD or NADP as acceptor"/>
    <property type="evidence" value="ECO:0007669"/>
    <property type="project" value="TreeGrafter"/>
</dbReference>
<dbReference type="GO" id="GO:0046256">
    <property type="term" value="P:2,4,6-trinitrotoluene catabolic process"/>
    <property type="evidence" value="ECO:0007669"/>
    <property type="project" value="TreeGrafter"/>
</dbReference>
<dbReference type="CDD" id="cd02149">
    <property type="entry name" value="NfsB-like"/>
    <property type="match status" value="1"/>
</dbReference>
<dbReference type="FunFam" id="3.40.109.10:FF:000002">
    <property type="entry name" value="Oxygen-insensitive NAD(P)H nitroreductase"/>
    <property type="match status" value="1"/>
</dbReference>
<dbReference type="Gene3D" id="3.40.109.10">
    <property type="entry name" value="NADH Oxidase"/>
    <property type="match status" value="1"/>
</dbReference>
<dbReference type="InterPro" id="IPR033878">
    <property type="entry name" value="NfsB-like"/>
</dbReference>
<dbReference type="InterPro" id="IPR029479">
    <property type="entry name" value="Nitroreductase"/>
</dbReference>
<dbReference type="InterPro" id="IPR000415">
    <property type="entry name" value="Nitroreductase-like"/>
</dbReference>
<dbReference type="InterPro" id="IPR050627">
    <property type="entry name" value="Nitroreductase/BluB"/>
</dbReference>
<dbReference type="NCBIfam" id="NF008275">
    <property type="entry name" value="PRK11053.1"/>
    <property type="match status" value="1"/>
</dbReference>
<dbReference type="PANTHER" id="PTHR23026">
    <property type="entry name" value="NADPH NITROREDUCTASE"/>
    <property type="match status" value="1"/>
</dbReference>
<dbReference type="PANTHER" id="PTHR23026:SF125">
    <property type="entry name" value="OXYGEN-INSENSITIVE NAD(P)H NITROREDUCTASE"/>
    <property type="match status" value="1"/>
</dbReference>
<dbReference type="Pfam" id="PF00881">
    <property type="entry name" value="Nitroreductase"/>
    <property type="match status" value="1"/>
</dbReference>
<dbReference type="SUPFAM" id="SSF55469">
    <property type="entry name" value="FMN-dependent nitroreductase-like"/>
    <property type="match status" value="1"/>
</dbReference>
<reference key="1">
    <citation type="journal article" date="1991" name="J. Biol. Chem.">
        <title>Cloning, nucleotide sequence, and expression of the nitroreductase gene from Enterobacter cloacae.</title>
        <authorList>
            <person name="Bryant C."/>
            <person name="Hubbard L."/>
            <person name="McElroy W.D."/>
        </authorList>
    </citation>
    <scope>NUCLEOTIDE SEQUENCE [GENOMIC DNA]</scope>
    <source>
        <strain>ATCC 43560 / 96-3</strain>
    </source>
</reference>
<reference key="2">
    <citation type="journal article" date="1991" name="J. Biol. Chem.">
        <title>Purification and characterization of an oxygen-insensitive NAD(P)H nitroreductase from Enterobacter cloacae.</title>
        <authorList>
            <person name="Bryant C."/>
            <person name="Deluca M."/>
        </authorList>
    </citation>
    <scope>CHARACTERIZATION</scope>
</reference>
<reference key="3">
    <citation type="journal article" date="2002" name="J. Biol. Chem.">
        <title>Structures of nitroreductase in three states: effects of inhibitor binding and reduction.</title>
        <authorList>
            <person name="Haynes C.A."/>
            <person name="Koder R.L."/>
            <person name="Miller A.-F."/>
            <person name="Rodgers D.W."/>
        </authorList>
    </citation>
    <scope>X-RAY CRYSTALLOGRAPHY (1.8 ANGSTROMS) IN COMPLEXES WITH FMN; ACETATE AND BENZOIC ACID</scope>
    <scope>SUBUNIT</scope>
</reference>
<reference evidence="7 8" key="4">
    <citation type="journal article" date="2017" name="Structure">
        <title>Mechanism-Informed Refinement Reveals Altered Substrate-Binding Mode for Catalytically Competent Nitroreductase.</title>
        <authorList>
            <person name="Pitsawong W."/>
            <person name="Haynes C.A."/>
            <person name="Koder R.L."/>
            <person name="Rodgers D.W."/>
            <person name="Miller A.F."/>
        </authorList>
    </citation>
    <scope>X-RAY CRYSTALLOGRAPHY (1.85 ANGSTROMS) IN COMPLEX WITH FMN AND THE NADH ANALOG NAAD</scope>
    <scope>COFACTOR</scope>
</reference>
<keyword id="KW-0002">3D-structure</keyword>
<keyword id="KW-0285">Flavoprotein</keyword>
<keyword id="KW-0288">FMN</keyword>
<keyword id="KW-0520">NAD</keyword>
<keyword id="KW-0521">NADP</keyword>
<keyword id="KW-0560">Oxidoreductase</keyword>
<name>NFSB_ENTCL</name>
<evidence type="ECO:0000250" key="1">
    <source>
        <dbReference type="UniProtKB" id="P38489"/>
    </source>
</evidence>
<evidence type="ECO:0000269" key="2">
    <source>
    </source>
</evidence>
<evidence type="ECO:0000269" key="3">
    <source>
    </source>
</evidence>
<evidence type="ECO:0000305" key="4"/>
<evidence type="ECO:0000305" key="5">
    <source>
    </source>
</evidence>
<evidence type="ECO:0000312" key="6">
    <source>
        <dbReference type="EMBL" id="AAA62801.1"/>
    </source>
</evidence>
<evidence type="ECO:0007744" key="7">
    <source>
        <dbReference type="PDB" id="5J8D"/>
    </source>
</evidence>
<evidence type="ECO:0007744" key="8">
    <source>
        <dbReference type="PDB" id="5J8G"/>
    </source>
</evidence>
<evidence type="ECO:0007829" key="9">
    <source>
        <dbReference type="PDB" id="1KQB"/>
    </source>
</evidence>
<comment type="function">
    <text>Reduction of a variety of nitroaromatic compounds using NADH (and to lesser extent NADPH) as source of reducing equivalents; two electrons are transferred.</text>
</comment>
<comment type="cofactor">
    <cofactor evidence="3">
        <name>FMN</name>
        <dbReference type="ChEBI" id="CHEBI:58210"/>
    </cofactor>
</comment>
<comment type="subunit">
    <text evidence="2">Homodimer.</text>
</comment>
<comment type="miscellaneous">
    <text>The nitroreductase might be involved in the quinone metabolism.</text>
</comment>
<comment type="similarity">
    <text evidence="4">Belongs to the nitroreductase family.</text>
</comment>